<reference key="1">
    <citation type="submission" date="2007-04" db="EMBL/GenBank/DDBJ databases">
        <title>Complete sequence of chromosome of Rhodobacter sphaeroides ATCC 17025.</title>
        <authorList>
            <consortium name="US DOE Joint Genome Institute"/>
            <person name="Copeland A."/>
            <person name="Lucas S."/>
            <person name="Lapidus A."/>
            <person name="Barry K."/>
            <person name="Detter J.C."/>
            <person name="Glavina del Rio T."/>
            <person name="Hammon N."/>
            <person name="Israni S."/>
            <person name="Dalin E."/>
            <person name="Tice H."/>
            <person name="Pitluck S."/>
            <person name="Chertkov O."/>
            <person name="Brettin T."/>
            <person name="Bruce D."/>
            <person name="Han C."/>
            <person name="Schmutz J."/>
            <person name="Larimer F."/>
            <person name="Land M."/>
            <person name="Hauser L."/>
            <person name="Kyrpides N."/>
            <person name="Kim E."/>
            <person name="Richardson P."/>
            <person name="Mackenzie C."/>
            <person name="Choudhary M."/>
            <person name="Donohue T.J."/>
            <person name="Kaplan S."/>
        </authorList>
    </citation>
    <scope>NUCLEOTIDE SEQUENCE [LARGE SCALE GENOMIC DNA]</scope>
    <source>
        <strain>ATCC 17025 / ATH 2.4.3</strain>
    </source>
</reference>
<gene>
    <name evidence="1" type="primary">rsmH</name>
    <name type="synonym">mraW</name>
    <name type="ordered locus">Rsph17025_0683</name>
</gene>
<name>RSMH_CERS5</name>
<proteinExistence type="inferred from homology"/>
<organism>
    <name type="scientific">Cereibacter sphaeroides (strain ATCC 17025 / ATH 2.4.3)</name>
    <name type="common">Rhodobacter sphaeroides</name>
    <dbReference type="NCBI Taxonomy" id="349102"/>
    <lineage>
        <taxon>Bacteria</taxon>
        <taxon>Pseudomonadati</taxon>
        <taxon>Pseudomonadota</taxon>
        <taxon>Alphaproteobacteria</taxon>
        <taxon>Rhodobacterales</taxon>
        <taxon>Paracoccaceae</taxon>
        <taxon>Cereibacter</taxon>
    </lineage>
</organism>
<feature type="chain" id="PRO_0000387073" description="Ribosomal RNA small subunit methyltransferase H">
    <location>
        <begin position="1"/>
        <end position="331"/>
    </location>
</feature>
<feature type="region of interest" description="Disordered" evidence="2">
    <location>
        <begin position="308"/>
        <end position="331"/>
    </location>
</feature>
<feature type="binding site" evidence="1">
    <location>
        <begin position="38"/>
        <end position="40"/>
    </location>
    <ligand>
        <name>S-adenosyl-L-methionine</name>
        <dbReference type="ChEBI" id="CHEBI:59789"/>
    </ligand>
</feature>
<feature type="binding site" evidence="1">
    <location>
        <position position="56"/>
    </location>
    <ligand>
        <name>S-adenosyl-L-methionine</name>
        <dbReference type="ChEBI" id="CHEBI:59789"/>
    </ligand>
</feature>
<feature type="binding site" evidence="1">
    <location>
        <position position="83"/>
    </location>
    <ligand>
        <name>S-adenosyl-L-methionine</name>
        <dbReference type="ChEBI" id="CHEBI:59789"/>
    </ligand>
</feature>
<feature type="binding site" evidence="1">
    <location>
        <position position="100"/>
    </location>
    <ligand>
        <name>S-adenosyl-L-methionine</name>
        <dbReference type="ChEBI" id="CHEBI:59789"/>
    </ligand>
</feature>
<feature type="binding site" evidence="1">
    <location>
        <position position="107"/>
    </location>
    <ligand>
        <name>S-adenosyl-L-methionine</name>
        <dbReference type="ChEBI" id="CHEBI:59789"/>
    </ligand>
</feature>
<accession>A4WQC5</accession>
<evidence type="ECO:0000255" key="1">
    <source>
        <dbReference type="HAMAP-Rule" id="MF_01007"/>
    </source>
</evidence>
<evidence type="ECO:0000256" key="2">
    <source>
        <dbReference type="SAM" id="MobiDB-lite"/>
    </source>
</evidence>
<keyword id="KW-0963">Cytoplasm</keyword>
<keyword id="KW-0489">Methyltransferase</keyword>
<keyword id="KW-0698">rRNA processing</keyword>
<keyword id="KW-0949">S-adenosyl-L-methionine</keyword>
<keyword id="KW-0808">Transferase</keyword>
<protein>
    <recommendedName>
        <fullName evidence="1">Ribosomal RNA small subunit methyltransferase H</fullName>
        <ecNumber evidence="1">2.1.1.199</ecNumber>
    </recommendedName>
    <alternativeName>
        <fullName evidence="1">16S rRNA m(4)C1402 methyltransferase</fullName>
    </alternativeName>
    <alternativeName>
        <fullName evidence="1">rRNA (cytosine-N(4)-)-methyltransferase RsmH</fullName>
    </alternativeName>
</protein>
<dbReference type="EC" id="2.1.1.199" evidence="1"/>
<dbReference type="EMBL" id="CP000661">
    <property type="protein sequence ID" value="ABP69589.1"/>
    <property type="molecule type" value="Genomic_DNA"/>
</dbReference>
<dbReference type="SMR" id="A4WQC5"/>
<dbReference type="STRING" id="349102.Rsph17025_0683"/>
<dbReference type="KEGG" id="rsq:Rsph17025_0683"/>
<dbReference type="eggNOG" id="COG0275">
    <property type="taxonomic scope" value="Bacteria"/>
</dbReference>
<dbReference type="HOGENOM" id="CLU_038422_1_1_5"/>
<dbReference type="BioCyc" id="RSPH349102:G1G8M-705-MONOMER"/>
<dbReference type="GO" id="GO:0005737">
    <property type="term" value="C:cytoplasm"/>
    <property type="evidence" value="ECO:0007669"/>
    <property type="project" value="UniProtKB-SubCell"/>
</dbReference>
<dbReference type="GO" id="GO:0071424">
    <property type="term" value="F:rRNA (cytosine-N4-)-methyltransferase activity"/>
    <property type="evidence" value="ECO:0007669"/>
    <property type="project" value="UniProtKB-UniRule"/>
</dbReference>
<dbReference type="GO" id="GO:0070475">
    <property type="term" value="P:rRNA base methylation"/>
    <property type="evidence" value="ECO:0007669"/>
    <property type="project" value="UniProtKB-UniRule"/>
</dbReference>
<dbReference type="CDD" id="cd02440">
    <property type="entry name" value="AdoMet_MTases"/>
    <property type="match status" value="1"/>
</dbReference>
<dbReference type="FunFam" id="1.10.150.170:FF:000003">
    <property type="entry name" value="Ribosomal RNA small subunit methyltransferase H"/>
    <property type="match status" value="1"/>
</dbReference>
<dbReference type="Gene3D" id="1.10.150.170">
    <property type="entry name" value="Putative methyltransferase TM0872, insert domain"/>
    <property type="match status" value="1"/>
</dbReference>
<dbReference type="Gene3D" id="3.40.50.150">
    <property type="entry name" value="Vaccinia Virus protein VP39"/>
    <property type="match status" value="1"/>
</dbReference>
<dbReference type="HAMAP" id="MF_01007">
    <property type="entry name" value="16SrRNA_methyltr_H"/>
    <property type="match status" value="1"/>
</dbReference>
<dbReference type="InterPro" id="IPR002903">
    <property type="entry name" value="RsmH"/>
</dbReference>
<dbReference type="InterPro" id="IPR023397">
    <property type="entry name" value="SAM-dep_MeTrfase_MraW_recog"/>
</dbReference>
<dbReference type="InterPro" id="IPR029063">
    <property type="entry name" value="SAM-dependent_MTases_sf"/>
</dbReference>
<dbReference type="NCBIfam" id="TIGR00006">
    <property type="entry name" value="16S rRNA (cytosine(1402)-N(4))-methyltransferase RsmH"/>
    <property type="match status" value="1"/>
</dbReference>
<dbReference type="PANTHER" id="PTHR11265:SF0">
    <property type="entry name" value="12S RRNA N4-METHYLCYTIDINE METHYLTRANSFERASE"/>
    <property type="match status" value="1"/>
</dbReference>
<dbReference type="PANTHER" id="PTHR11265">
    <property type="entry name" value="S-ADENOSYL-METHYLTRANSFERASE MRAW"/>
    <property type="match status" value="1"/>
</dbReference>
<dbReference type="Pfam" id="PF01795">
    <property type="entry name" value="Methyltransf_5"/>
    <property type="match status" value="1"/>
</dbReference>
<dbReference type="PIRSF" id="PIRSF004486">
    <property type="entry name" value="MraW"/>
    <property type="match status" value="1"/>
</dbReference>
<dbReference type="SUPFAM" id="SSF81799">
    <property type="entry name" value="Putative methyltransferase TM0872, insert domain"/>
    <property type="match status" value="1"/>
</dbReference>
<dbReference type="SUPFAM" id="SSF53335">
    <property type="entry name" value="S-adenosyl-L-methionine-dependent methyltransferases"/>
    <property type="match status" value="1"/>
</dbReference>
<comment type="function">
    <text evidence="1">Specifically methylates the N4 position of cytidine in position 1402 (C1402) of 16S rRNA.</text>
</comment>
<comment type="catalytic activity">
    <reaction evidence="1">
        <text>cytidine(1402) in 16S rRNA + S-adenosyl-L-methionine = N(4)-methylcytidine(1402) in 16S rRNA + S-adenosyl-L-homocysteine + H(+)</text>
        <dbReference type="Rhea" id="RHEA:42928"/>
        <dbReference type="Rhea" id="RHEA-COMP:10286"/>
        <dbReference type="Rhea" id="RHEA-COMP:10287"/>
        <dbReference type="ChEBI" id="CHEBI:15378"/>
        <dbReference type="ChEBI" id="CHEBI:57856"/>
        <dbReference type="ChEBI" id="CHEBI:59789"/>
        <dbReference type="ChEBI" id="CHEBI:74506"/>
        <dbReference type="ChEBI" id="CHEBI:82748"/>
        <dbReference type="EC" id="2.1.1.199"/>
    </reaction>
</comment>
<comment type="subcellular location">
    <subcellularLocation>
        <location evidence="1">Cytoplasm</location>
    </subcellularLocation>
</comment>
<comment type="similarity">
    <text evidence="1">Belongs to the methyltransferase superfamily. RsmH family.</text>
</comment>
<sequence length="331" mass="35693">MAAAETGRRPHIPVLLRPLLAAVAPVSGVWLDGTFGAGGYARGLLEAGADRVIGVDRDPLALEMAQDWAGAYGDRLRLVAGTFSQLDVHAGEPLDGVVLDLGVSSMQLDQADRGFSFQKDGPLDMRMSQQGESAADLVNEASEETLADILYHYGEERASRRIARAIVEARAAGPITRTLHLAEIVARCLPRPKPGQMHPATRSFQAIRIAVNAEFSELVEGLEAAERALKPGGRLAVVTFHSLEDRIVKRFLQLRSGGEGQGNRYAPETRAEAARFTLPLRRAISPDEAELADNPRARSARLRVGVRTDAPAGPVDPQVLGMPLIPKKGRR</sequence>